<organismHost>
    <name type="scientific">Acanthamoeba polyphaga</name>
    <name type="common">Amoeba</name>
    <dbReference type="NCBI Taxonomy" id="5757"/>
</organismHost>
<feature type="chain" id="PRO_0000244780" description="Uncharacterized protein R895">
    <location>
        <begin position="1"/>
        <end position="690"/>
    </location>
</feature>
<keyword id="KW-1185">Reference proteome</keyword>
<dbReference type="EMBL" id="AY653733">
    <property type="protein sequence ID" value="AAV51152.1"/>
    <property type="molecule type" value="Genomic_DNA"/>
</dbReference>
<dbReference type="SMR" id="Q5UQZ0"/>
<dbReference type="Proteomes" id="UP000001134">
    <property type="component" value="Genome"/>
</dbReference>
<dbReference type="Gene3D" id="3.60.10.10">
    <property type="entry name" value="Endonuclease/exonuclease/phosphatase"/>
    <property type="match status" value="2"/>
</dbReference>
<dbReference type="InterPro" id="IPR036691">
    <property type="entry name" value="Endo/exonu/phosph_ase_sf"/>
</dbReference>
<dbReference type="SUPFAM" id="SSF56219">
    <property type="entry name" value="DNase I-like"/>
    <property type="match status" value="2"/>
</dbReference>
<gene>
    <name type="ordered locus">MIMI_R895</name>
</gene>
<sequence length="690" mass="79157">MYDQDINTINVENFYNFSKQLPITPIRIVSYFLRSKFLDPKDKEEYKIRGWESRAPYVYQLLNRVGADIILLQGMNLDQCKNIISFLEPFGYNVQFRAAHSGKESREIIDDEWTGAFIGIAYSMNKFTILNKGGFWLKEDPDIPPPSIADNSENRRSVERGGTDKCFGDTHSYRYVFYETLLNIESNIPITIGTSHFPIGGINSRIKSSKLVMERLCKISDGHPLVFGGALMLFEDKDGNTAYETLTRYACDYRNSKDHYGHQTSFIGYPNDPFKVDINSNGIVSPRNLDLIFHRGLQSIRSFIMSGEFNSLEKKLVEPLIAPIKDSDKRQFASDRCLIGVDLQFNRSAKKEIFQRTLNNENSFNFSKNLSPKIIRTVNWNIRTSFLDPKDKKEYSIRGWQSRKHYVTEMLTHLAPDLILLQEMSPSQANDMKMFLNSIGYEVIFRTAHTGHDLYEIIDGEWTGALTGISYFRNRFFINCHGGFWLKDDPHTPPPLDADNAENRRPIQEGGIDKCFGDTHSYRHCQWATLLDVQSQQLITTAVSDFPIGGKDSRLKSAILCNSMLREISGENCLIFGGEICTFEDKGMDGFDTYKKITEQATDWRNTLYGHYGHQATFVGYHTDKYKVEIDNHGIVSPRNIDIIVHRGFTQGIRSFSLSGEFNPSEKKLNKPLISVVIIQKTDYFHQTIF</sequence>
<organism>
    <name type="scientific">Acanthamoeba polyphaga mimivirus</name>
    <name type="common">APMV</name>
    <dbReference type="NCBI Taxonomy" id="212035"/>
    <lineage>
        <taxon>Viruses</taxon>
        <taxon>Varidnaviria</taxon>
        <taxon>Bamfordvirae</taxon>
        <taxon>Nucleocytoviricota</taxon>
        <taxon>Megaviricetes</taxon>
        <taxon>Imitervirales</taxon>
        <taxon>Mimiviridae</taxon>
        <taxon>Megamimivirinae</taxon>
        <taxon>Mimivirus</taxon>
        <taxon>Mimivirus bradfordmassiliense</taxon>
    </lineage>
</organism>
<accession>Q5UQZ0</accession>
<proteinExistence type="predicted"/>
<reference key="1">
    <citation type="journal article" date="2004" name="Science">
        <title>The 1.2-megabase genome sequence of Mimivirus.</title>
        <authorList>
            <person name="Raoult D."/>
            <person name="Audic S."/>
            <person name="Robert C."/>
            <person name="Abergel C."/>
            <person name="Renesto P."/>
            <person name="Ogata H."/>
            <person name="La Scola B."/>
            <person name="Susan M."/>
            <person name="Claverie J.-M."/>
        </authorList>
    </citation>
    <scope>NUCLEOTIDE SEQUENCE [LARGE SCALE GENOMIC DNA]</scope>
    <source>
        <strain>Rowbotham-Bradford</strain>
    </source>
</reference>
<name>YR895_MIMIV</name>
<protein>
    <recommendedName>
        <fullName>Uncharacterized protein R895</fullName>
    </recommendedName>
</protein>